<feature type="chain" id="PRO_0000144503" description="ATP synthase subunit beta, chloroplastic">
    <location>
        <begin position="1"/>
        <end position="493"/>
    </location>
</feature>
<feature type="binding site" evidence="1">
    <location>
        <begin position="170"/>
        <end position="177"/>
    </location>
    <ligand>
        <name>ATP</name>
        <dbReference type="ChEBI" id="CHEBI:30616"/>
    </ligand>
</feature>
<geneLocation type="chloroplast"/>
<gene>
    <name evidence="1" type="primary">atpB</name>
</gene>
<name>ATPB_CHAGL</name>
<accession>Q8SLY2</accession>
<reference key="1">
    <citation type="journal article" date="2002" name="Proc. Natl. Acad. Sci. U.S.A.">
        <title>The chloroplast and mitochondrial genome sequences of the charophyte Chaetosphaeridium globosum: insights into the timing of the events that restructured organelle DNAs within the green algal lineage that led to land plants.</title>
        <authorList>
            <person name="Turmel M."/>
            <person name="Otis C."/>
            <person name="Lemieux C."/>
        </authorList>
    </citation>
    <scope>NUCLEOTIDE SEQUENCE [LARGE SCALE GENOMIC DNA]</scope>
    <source>
        <strain>M1311</strain>
    </source>
</reference>
<reference key="2">
    <citation type="journal article" date="2001" name="Science">
        <title>The closest living relatives of land plants.</title>
        <authorList>
            <person name="Karol K.G."/>
            <person name="McCourt R.M."/>
            <person name="Cimino M.T."/>
            <person name="Delwiche C.F."/>
        </authorList>
    </citation>
    <scope>NUCLEOTIDE SEQUENCE [GENOMIC DNA] OF 69-467</scope>
    <source>
        <strain>SAG 26.98</strain>
    </source>
</reference>
<organism>
    <name type="scientific">Chaetosphaeridium globosum</name>
    <name type="common">Charophycean green alga</name>
    <name type="synonym">Herposteiron globosum</name>
    <dbReference type="NCBI Taxonomy" id="96477"/>
    <lineage>
        <taxon>Eukaryota</taxon>
        <taxon>Viridiplantae</taxon>
        <taxon>Streptophyta</taxon>
        <taxon>Coleochaetophyceae</taxon>
        <taxon>Coleochaetales</taxon>
        <taxon>Chaetosphaeridiaceae</taxon>
        <taxon>Chaetosphaeridium</taxon>
    </lineage>
</organism>
<dbReference type="EC" id="7.1.2.2" evidence="1"/>
<dbReference type="EMBL" id="AF494278">
    <property type="protein sequence ID" value="AAM96500.1"/>
    <property type="molecule type" value="Genomic_DNA"/>
</dbReference>
<dbReference type="EMBL" id="AF408792">
    <property type="protein sequence ID" value="AAL83520.1"/>
    <property type="molecule type" value="Genomic_DNA"/>
</dbReference>
<dbReference type="RefSeq" id="NP_683810.1">
    <property type="nucleotide sequence ID" value="NC_004115.1"/>
</dbReference>
<dbReference type="SMR" id="Q8SLY2"/>
<dbReference type="GeneID" id="860669"/>
<dbReference type="GO" id="GO:0009535">
    <property type="term" value="C:chloroplast thylakoid membrane"/>
    <property type="evidence" value="ECO:0007669"/>
    <property type="project" value="UniProtKB-SubCell"/>
</dbReference>
<dbReference type="GO" id="GO:0005739">
    <property type="term" value="C:mitochondrion"/>
    <property type="evidence" value="ECO:0007669"/>
    <property type="project" value="GOC"/>
</dbReference>
<dbReference type="GO" id="GO:0045259">
    <property type="term" value="C:proton-transporting ATP synthase complex"/>
    <property type="evidence" value="ECO:0007669"/>
    <property type="project" value="UniProtKB-KW"/>
</dbReference>
<dbReference type="GO" id="GO:0005524">
    <property type="term" value="F:ATP binding"/>
    <property type="evidence" value="ECO:0007669"/>
    <property type="project" value="UniProtKB-UniRule"/>
</dbReference>
<dbReference type="GO" id="GO:0016887">
    <property type="term" value="F:ATP hydrolysis activity"/>
    <property type="evidence" value="ECO:0007669"/>
    <property type="project" value="InterPro"/>
</dbReference>
<dbReference type="GO" id="GO:0046933">
    <property type="term" value="F:proton-transporting ATP synthase activity, rotational mechanism"/>
    <property type="evidence" value="ECO:0007669"/>
    <property type="project" value="UniProtKB-UniRule"/>
</dbReference>
<dbReference type="GO" id="GO:0042776">
    <property type="term" value="P:proton motive force-driven mitochondrial ATP synthesis"/>
    <property type="evidence" value="ECO:0007669"/>
    <property type="project" value="TreeGrafter"/>
</dbReference>
<dbReference type="CDD" id="cd18110">
    <property type="entry name" value="ATP-synt_F1_beta_C"/>
    <property type="match status" value="1"/>
</dbReference>
<dbReference type="CDD" id="cd18115">
    <property type="entry name" value="ATP-synt_F1_beta_N"/>
    <property type="match status" value="1"/>
</dbReference>
<dbReference type="CDD" id="cd01133">
    <property type="entry name" value="F1-ATPase_beta_CD"/>
    <property type="match status" value="1"/>
</dbReference>
<dbReference type="FunFam" id="1.10.1140.10:FF:000001">
    <property type="entry name" value="ATP synthase subunit beta"/>
    <property type="match status" value="1"/>
</dbReference>
<dbReference type="FunFam" id="3.40.50.12240:FF:000006">
    <property type="entry name" value="ATP synthase subunit beta"/>
    <property type="match status" value="1"/>
</dbReference>
<dbReference type="FunFam" id="3.40.50.300:FF:000004">
    <property type="entry name" value="ATP synthase subunit beta"/>
    <property type="match status" value="1"/>
</dbReference>
<dbReference type="FunFam" id="2.40.10.170:FF:000002">
    <property type="entry name" value="ATP synthase subunit beta, chloroplastic"/>
    <property type="match status" value="1"/>
</dbReference>
<dbReference type="Gene3D" id="2.40.10.170">
    <property type="match status" value="1"/>
</dbReference>
<dbReference type="Gene3D" id="1.10.1140.10">
    <property type="entry name" value="Bovine Mitochondrial F1-atpase, Atp Synthase Beta Chain, Chain D, domain 3"/>
    <property type="match status" value="1"/>
</dbReference>
<dbReference type="Gene3D" id="3.40.50.300">
    <property type="entry name" value="P-loop containing nucleotide triphosphate hydrolases"/>
    <property type="match status" value="1"/>
</dbReference>
<dbReference type="HAMAP" id="MF_01347">
    <property type="entry name" value="ATP_synth_beta_bact"/>
    <property type="match status" value="1"/>
</dbReference>
<dbReference type="InterPro" id="IPR003593">
    <property type="entry name" value="AAA+_ATPase"/>
</dbReference>
<dbReference type="InterPro" id="IPR055190">
    <property type="entry name" value="ATP-synt_VA_C"/>
</dbReference>
<dbReference type="InterPro" id="IPR005722">
    <property type="entry name" value="ATP_synth_F1_bsu"/>
</dbReference>
<dbReference type="InterPro" id="IPR020003">
    <property type="entry name" value="ATPase_a/bsu_AS"/>
</dbReference>
<dbReference type="InterPro" id="IPR050053">
    <property type="entry name" value="ATPase_alpha/beta_chains"/>
</dbReference>
<dbReference type="InterPro" id="IPR004100">
    <property type="entry name" value="ATPase_F1/V1/A1_a/bsu_N"/>
</dbReference>
<dbReference type="InterPro" id="IPR036121">
    <property type="entry name" value="ATPase_F1/V1/A1_a/bsu_N_sf"/>
</dbReference>
<dbReference type="InterPro" id="IPR000194">
    <property type="entry name" value="ATPase_F1/V1/A1_a/bsu_nucl-bd"/>
</dbReference>
<dbReference type="InterPro" id="IPR024034">
    <property type="entry name" value="ATPase_F1/V1_b/a_C"/>
</dbReference>
<dbReference type="InterPro" id="IPR027417">
    <property type="entry name" value="P-loop_NTPase"/>
</dbReference>
<dbReference type="NCBIfam" id="TIGR01039">
    <property type="entry name" value="atpD"/>
    <property type="match status" value="1"/>
</dbReference>
<dbReference type="PANTHER" id="PTHR15184">
    <property type="entry name" value="ATP SYNTHASE"/>
    <property type="match status" value="1"/>
</dbReference>
<dbReference type="PANTHER" id="PTHR15184:SF71">
    <property type="entry name" value="ATP SYNTHASE SUBUNIT BETA, MITOCHONDRIAL"/>
    <property type="match status" value="1"/>
</dbReference>
<dbReference type="Pfam" id="PF00006">
    <property type="entry name" value="ATP-synt_ab"/>
    <property type="match status" value="1"/>
</dbReference>
<dbReference type="Pfam" id="PF02874">
    <property type="entry name" value="ATP-synt_ab_N"/>
    <property type="match status" value="1"/>
</dbReference>
<dbReference type="Pfam" id="PF22919">
    <property type="entry name" value="ATP-synt_VA_C"/>
    <property type="match status" value="1"/>
</dbReference>
<dbReference type="SMART" id="SM00382">
    <property type="entry name" value="AAA"/>
    <property type="match status" value="1"/>
</dbReference>
<dbReference type="SUPFAM" id="SSF47917">
    <property type="entry name" value="C-terminal domain of alpha and beta subunits of F1 ATP synthase"/>
    <property type="match status" value="1"/>
</dbReference>
<dbReference type="SUPFAM" id="SSF50615">
    <property type="entry name" value="N-terminal domain of alpha and beta subunits of F1 ATP synthase"/>
    <property type="match status" value="1"/>
</dbReference>
<dbReference type="SUPFAM" id="SSF52540">
    <property type="entry name" value="P-loop containing nucleoside triphosphate hydrolases"/>
    <property type="match status" value="1"/>
</dbReference>
<dbReference type="PROSITE" id="PS00152">
    <property type="entry name" value="ATPASE_ALPHA_BETA"/>
    <property type="match status" value="1"/>
</dbReference>
<keyword id="KW-0066">ATP synthesis</keyword>
<keyword id="KW-0067">ATP-binding</keyword>
<keyword id="KW-0139">CF(1)</keyword>
<keyword id="KW-0150">Chloroplast</keyword>
<keyword id="KW-0375">Hydrogen ion transport</keyword>
<keyword id="KW-0406">Ion transport</keyword>
<keyword id="KW-0472">Membrane</keyword>
<keyword id="KW-0547">Nucleotide-binding</keyword>
<keyword id="KW-0934">Plastid</keyword>
<keyword id="KW-0793">Thylakoid</keyword>
<keyword id="KW-1278">Translocase</keyword>
<keyword id="KW-0813">Transport</keyword>
<evidence type="ECO:0000255" key="1">
    <source>
        <dbReference type="HAMAP-Rule" id="MF_01347"/>
    </source>
</evidence>
<proteinExistence type="inferred from homology"/>
<protein>
    <recommendedName>
        <fullName evidence="1">ATP synthase subunit beta, chloroplastic</fullName>
        <ecNumber evidence="1">7.1.2.2</ecNumber>
    </recommendedName>
    <alternativeName>
        <fullName evidence="1">ATP synthase F1 sector subunit beta</fullName>
    </alternativeName>
    <alternativeName>
        <fullName evidence="1">F-ATPase subunit beta</fullName>
    </alternativeName>
</protein>
<sequence length="493" mass="52945">MINSSFILLASTVTSKKVGRITQIIGPVMDVAFPSGNMPNIYNALVVKGKNAAGQDIDVTCEVQQLLGDNKVRAVAMSATDGLMRGMDVIDTGSALSVPVGEVTLGRIFNVLGEPVDNMGPVNATVTSPIHRSAPAFTQLDTKLSIFETGIKVVDLLAPYRRGGKIGLFGGAGVGKTVLIMELINNIAKAHGGVSVFGGVGERTREGNDLYMEMKESKVINEENLGESKVALVYGQMNEPPGARMRVGLTALTMAEYFRDVNKQDVLLFIDNIFRFVQAGSEVSALLGRMPSAVGYQPTLSTEMGGLQERITSTKEGSITSIQAVYVPADDLTDPAPATTFAHLDATTVLSRGLAAKGIYPAVDPLDSTSTMLQPWIVGEEHYETAQGVKKTLQRYKELQDIIAILGLDELSEEDRLLVARARKIERFLSQPFFVAEVFTGSPGKYVSLVETIKGFQMILSGDLDSLPEQAFYLVGNIDEATAKAATLQVENS</sequence>
<comment type="function">
    <text evidence="1">Produces ATP from ADP in the presence of a proton gradient across the membrane. The catalytic sites are hosted primarily by the beta subunits.</text>
</comment>
<comment type="catalytic activity">
    <reaction evidence="1">
        <text>ATP + H2O + 4 H(+)(in) = ADP + phosphate + 5 H(+)(out)</text>
        <dbReference type="Rhea" id="RHEA:57720"/>
        <dbReference type="ChEBI" id="CHEBI:15377"/>
        <dbReference type="ChEBI" id="CHEBI:15378"/>
        <dbReference type="ChEBI" id="CHEBI:30616"/>
        <dbReference type="ChEBI" id="CHEBI:43474"/>
        <dbReference type="ChEBI" id="CHEBI:456216"/>
        <dbReference type="EC" id="7.1.2.2"/>
    </reaction>
</comment>
<comment type="subunit">
    <text evidence="1">F-type ATPases have 2 components, CF(1) - the catalytic core - and CF(0) - the membrane proton channel. CF(1) has five subunits: alpha(3), beta(3), gamma(1), delta(1), epsilon(1). CF(0) has four main subunits: a(1), b(1), b'(1) and c(9-12).</text>
</comment>
<comment type="subcellular location">
    <subcellularLocation>
        <location evidence="1">Plastid</location>
        <location evidence="1">Chloroplast thylakoid membrane</location>
        <topology evidence="1">Peripheral membrane protein</topology>
    </subcellularLocation>
</comment>
<comment type="similarity">
    <text evidence="1">Belongs to the ATPase alpha/beta chains family.</text>
</comment>